<keyword id="KW-1003">Cell membrane</keyword>
<keyword id="KW-0406">Ion transport</keyword>
<keyword id="KW-0472">Membrane</keyword>
<keyword id="KW-1185">Reference proteome</keyword>
<keyword id="KW-0915">Sodium</keyword>
<keyword id="KW-0739">Sodium transport</keyword>
<keyword id="KW-1278">Translocase</keyword>
<keyword id="KW-0812">Transmembrane</keyword>
<keyword id="KW-1133">Transmembrane helix</keyword>
<keyword id="KW-0813">Transport</keyword>
<reference key="1">
    <citation type="journal article" date="2010" name="BMC Genomics">
        <title>A genomic perspective on the potential of Actinobacillus succinogenes for industrial succinate production.</title>
        <authorList>
            <person name="McKinlay J.B."/>
            <person name="Laivenieks M."/>
            <person name="Schindler B.D."/>
            <person name="McKinlay A.A."/>
            <person name="Siddaramappa S."/>
            <person name="Challacombe J.F."/>
            <person name="Lowry S.R."/>
            <person name="Clum A."/>
            <person name="Lapidus A.L."/>
            <person name="Burkhart K.B."/>
            <person name="Harkins V."/>
            <person name="Vieille C."/>
        </authorList>
    </citation>
    <scope>NUCLEOTIDE SEQUENCE [LARGE SCALE GENOMIC DNA]</scope>
    <source>
        <strain>ATCC 55618 / DSM 22257 / CCUG 43843 / 130Z</strain>
    </source>
</reference>
<gene>
    <name evidence="1" type="primary">oadG</name>
    <name type="ordered locus">Asuc_0303</name>
</gene>
<evidence type="ECO:0000255" key="1">
    <source>
        <dbReference type="HAMAP-Rule" id="MF_00404"/>
    </source>
</evidence>
<organism>
    <name type="scientific">Actinobacillus succinogenes (strain ATCC 55618 / DSM 22257 / CCUG 43843 / 130Z)</name>
    <dbReference type="NCBI Taxonomy" id="339671"/>
    <lineage>
        <taxon>Bacteria</taxon>
        <taxon>Pseudomonadati</taxon>
        <taxon>Pseudomonadota</taxon>
        <taxon>Gammaproteobacteria</taxon>
        <taxon>Pasteurellales</taxon>
        <taxon>Pasteurellaceae</taxon>
        <taxon>Actinobacillus</taxon>
    </lineage>
</organism>
<accession>A6VL34</accession>
<feature type="chain" id="PRO_1000123545" description="Probable oxaloacetate decarboxylase gamma chain">
    <location>
        <begin position="1"/>
        <end position="89"/>
    </location>
</feature>
<feature type="transmembrane region" description="Helical" evidence="1">
    <location>
        <begin position="13"/>
        <end position="33"/>
    </location>
</feature>
<sequence length="89" mass="9787">MTPAELFGEGINLMLSGMGFVITFLLILIWAITTMSKLINRFFPEPVKQSKPSQKPTALSAAVQGNDLDRLRPVIVAAIAHHRRSQGLN</sequence>
<dbReference type="EC" id="7.2.4.2" evidence="1"/>
<dbReference type="EMBL" id="CP000746">
    <property type="protein sequence ID" value="ABR73681.1"/>
    <property type="molecule type" value="Genomic_DNA"/>
</dbReference>
<dbReference type="RefSeq" id="WP_011978956.1">
    <property type="nucleotide sequence ID" value="NC_009655.1"/>
</dbReference>
<dbReference type="SMR" id="A6VL34"/>
<dbReference type="STRING" id="339671.Asuc_0303"/>
<dbReference type="KEGG" id="asu:Asuc_0303"/>
<dbReference type="eggNOG" id="COG3630">
    <property type="taxonomic scope" value="Bacteria"/>
</dbReference>
<dbReference type="HOGENOM" id="CLU_168750_3_2_6"/>
<dbReference type="OrthoDB" id="5772594at2"/>
<dbReference type="Proteomes" id="UP000001114">
    <property type="component" value="Chromosome"/>
</dbReference>
<dbReference type="GO" id="GO:0005886">
    <property type="term" value="C:plasma membrane"/>
    <property type="evidence" value="ECO:0007669"/>
    <property type="project" value="UniProtKB-SubCell"/>
</dbReference>
<dbReference type="GO" id="GO:0015451">
    <property type="term" value="F:decarboxylation-driven active transmembrane transporter activity"/>
    <property type="evidence" value="ECO:0007669"/>
    <property type="project" value="UniProtKB-EC"/>
</dbReference>
<dbReference type="GO" id="GO:0008948">
    <property type="term" value="F:oxaloacetate decarboxylase activity"/>
    <property type="evidence" value="ECO:0007669"/>
    <property type="project" value="UniProtKB-UniRule"/>
</dbReference>
<dbReference type="GO" id="GO:0015081">
    <property type="term" value="F:sodium ion transmembrane transporter activity"/>
    <property type="evidence" value="ECO:0007669"/>
    <property type="project" value="UniProtKB-UniRule"/>
</dbReference>
<dbReference type="GO" id="GO:0036376">
    <property type="term" value="P:sodium ion export across plasma membrane"/>
    <property type="evidence" value="ECO:0007669"/>
    <property type="project" value="InterPro"/>
</dbReference>
<dbReference type="HAMAP" id="MF_00404">
    <property type="entry name" value="OadG"/>
    <property type="match status" value="1"/>
</dbReference>
<dbReference type="InterPro" id="IPR005899">
    <property type="entry name" value="Na_pump_deCOase"/>
</dbReference>
<dbReference type="InterPro" id="IPR023424">
    <property type="entry name" value="OadG"/>
</dbReference>
<dbReference type="NCBIfam" id="TIGR01195">
    <property type="entry name" value="oadG_fam"/>
    <property type="match status" value="1"/>
</dbReference>
<dbReference type="NCBIfam" id="NF002792">
    <property type="entry name" value="PRK02919.1"/>
    <property type="match status" value="1"/>
</dbReference>
<dbReference type="Pfam" id="PF04277">
    <property type="entry name" value="OAD_gamma"/>
    <property type="match status" value="1"/>
</dbReference>
<name>OADG_ACTSZ</name>
<comment type="function">
    <text evidence="1">Catalyzes the decarboxylation of oxaloacetate coupled to Na(+) translocation.</text>
</comment>
<comment type="catalytic activity">
    <reaction evidence="1">
        <text>oxaloacetate + 2 Na(+)(in) + H(+) = pyruvate + 2 Na(+)(out) + CO2</text>
        <dbReference type="Rhea" id="RHEA:57724"/>
        <dbReference type="ChEBI" id="CHEBI:15361"/>
        <dbReference type="ChEBI" id="CHEBI:15378"/>
        <dbReference type="ChEBI" id="CHEBI:16452"/>
        <dbReference type="ChEBI" id="CHEBI:16526"/>
        <dbReference type="ChEBI" id="CHEBI:29101"/>
        <dbReference type="EC" id="7.2.4.2"/>
    </reaction>
</comment>
<comment type="cofactor">
    <cofactor evidence="1">
        <name>Na(+)</name>
        <dbReference type="ChEBI" id="CHEBI:29101"/>
    </cofactor>
</comment>
<comment type="subunit">
    <text evidence="1">Heterotrimer of an alpha, a beta and a gamma subunit.</text>
</comment>
<comment type="subcellular location">
    <subcellularLocation>
        <location evidence="1">Cell membrane</location>
        <topology evidence="1">Single-pass membrane protein</topology>
    </subcellularLocation>
</comment>
<comment type="similarity">
    <text evidence="1">Belongs to the OadG family.</text>
</comment>
<protein>
    <recommendedName>
        <fullName evidence="1">Probable oxaloacetate decarboxylase gamma chain</fullName>
        <ecNumber evidence="1">7.2.4.2</ecNumber>
    </recommendedName>
</protein>
<proteinExistence type="inferred from homology"/>